<name>VF244_IIV3</name>
<comment type="similarity">
    <text evidence="2">Belongs to the metallophosphoesterase superfamily. IIV-6 244L family.</text>
</comment>
<accession>Q196Y2</accession>
<feature type="chain" id="PRO_0000377493" description="Putative phosphoesterase 078R">
    <location>
        <begin position="1"/>
        <end position="347"/>
    </location>
</feature>
<feature type="binding site" evidence="1">
    <location>
        <position position="52"/>
    </location>
    <ligand>
        <name>a divalent metal cation</name>
        <dbReference type="ChEBI" id="CHEBI:60240"/>
        <label>1</label>
    </ligand>
</feature>
<feature type="binding site" evidence="1">
    <location>
        <position position="52"/>
    </location>
    <ligand>
        <name>a divalent metal cation</name>
        <dbReference type="ChEBI" id="CHEBI:60240"/>
        <label>2</label>
    </ligand>
</feature>
<feature type="binding site" evidence="1">
    <location>
        <position position="87"/>
    </location>
    <ligand>
        <name>a divalent metal cation</name>
        <dbReference type="ChEBI" id="CHEBI:60240"/>
        <label>2</label>
    </ligand>
</feature>
<feature type="binding site" evidence="1">
    <location>
        <position position="211"/>
    </location>
    <ligand>
        <name>a divalent metal cation</name>
        <dbReference type="ChEBI" id="CHEBI:60240"/>
        <label>1</label>
    </ligand>
</feature>
<keyword id="KW-0378">Hydrolase</keyword>
<keyword id="KW-0479">Metal-binding</keyword>
<keyword id="KW-1185">Reference proteome</keyword>
<protein>
    <recommendedName>
        <fullName>Putative phosphoesterase 078R</fullName>
        <ecNumber>3.1.-.-</ecNumber>
    </recommendedName>
</protein>
<sequence>MTSVERENQVSVLFIGDPHFKVKNYEFIPQFVEKILTILDRNPVDFVVVGGDLLDNHERLDVDPLNQAINFIDQLRTRHPTFVLVGNHDYKNNQQFLTADHWMNALKFWSNVTIVDRVVQHTCNRMKFVLVPYVPPGRFVEAIKTQLEEKELRAVKVVFAHQEFFGCKMGAITSSEGDKWPTDWPLVVSGHIHNKQWPQDNIYYPGSAMQHAFGQSVENTISRLVVRNKEFEYDEINLKMPKLSIKYMTVEDAARGNLRYKNTDRKRYKLVLSGALDEFAGFKKTAVYKQLLEEGFAVSFKIKPSTEVRSVDTLNGSRKFLDILTEKVQTTGDADLESLCKSFLAQG</sequence>
<organism>
    <name type="scientific">Invertebrate iridescent virus 3</name>
    <name type="common">IIV-3</name>
    <name type="synonym">Mosquito iridescent virus</name>
    <dbReference type="NCBI Taxonomy" id="345201"/>
    <lineage>
        <taxon>Viruses</taxon>
        <taxon>Varidnaviria</taxon>
        <taxon>Bamfordvirae</taxon>
        <taxon>Nucleocytoviricota</taxon>
        <taxon>Megaviricetes</taxon>
        <taxon>Pimascovirales</taxon>
        <taxon>Iridoviridae</taxon>
        <taxon>Betairidovirinae</taxon>
        <taxon>Chloriridovirus</taxon>
    </lineage>
</organism>
<dbReference type="EC" id="3.1.-.-"/>
<dbReference type="EMBL" id="DQ643392">
    <property type="protein sequence ID" value="ABF82108.1"/>
    <property type="molecule type" value="Genomic_DNA"/>
</dbReference>
<dbReference type="RefSeq" id="YP_654650.1">
    <property type="nucleotide sequence ID" value="NC_008187.1"/>
</dbReference>
<dbReference type="SMR" id="Q196Y2"/>
<dbReference type="KEGG" id="vg:4156289"/>
<dbReference type="OrthoDB" id="9744at10239"/>
<dbReference type="Proteomes" id="UP000001358">
    <property type="component" value="Genome"/>
</dbReference>
<dbReference type="GO" id="GO:0016787">
    <property type="term" value="F:hydrolase activity"/>
    <property type="evidence" value="ECO:0007669"/>
    <property type="project" value="UniProtKB-KW"/>
</dbReference>
<dbReference type="GO" id="GO:0046872">
    <property type="term" value="F:metal ion binding"/>
    <property type="evidence" value="ECO:0007669"/>
    <property type="project" value="UniProtKB-KW"/>
</dbReference>
<dbReference type="Gene3D" id="3.60.21.10">
    <property type="match status" value="1"/>
</dbReference>
<dbReference type="InterPro" id="IPR004843">
    <property type="entry name" value="Calcineurin-like_PHP_ApaH"/>
</dbReference>
<dbReference type="InterPro" id="IPR050535">
    <property type="entry name" value="DNA_Repair-Maintenance_Comp"/>
</dbReference>
<dbReference type="InterPro" id="IPR029052">
    <property type="entry name" value="Metallo-depent_PP-like"/>
</dbReference>
<dbReference type="PANTHER" id="PTHR30337">
    <property type="entry name" value="COMPONENT OF ATP-DEPENDENT DSDNA EXONUCLEASE"/>
    <property type="match status" value="1"/>
</dbReference>
<dbReference type="Pfam" id="PF00149">
    <property type="entry name" value="Metallophos"/>
    <property type="match status" value="1"/>
</dbReference>
<dbReference type="SUPFAM" id="SSF56300">
    <property type="entry name" value="Metallo-dependent phosphatases"/>
    <property type="match status" value="1"/>
</dbReference>
<organismHost>
    <name type="scientific">Aedes vexans</name>
    <name type="common">Inland floodwater mosquito</name>
    <name type="synonym">Culex vexans</name>
    <dbReference type="NCBI Taxonomy" id="7163"/>
</organismHost>
<organismHost>
    <name type="scientific">Culex territans</name>
    <dbReference type="NCBI Taxonomy" id="42431"/>
</organismHost>
<organismHost>
    <name type="scientific">Culiseta annulata</name>
    <dbReference type="NCBI Taxonomy" id="332058"/>
</organismHost>
<organismHost>
    <name type="scientific">Ochlerotatus sollicitans</name>
    <name type="common">eastern saltmarsh mosquito</name>
    <dbReference type="NCBI Taxonomy" id="310513"/>
</organismHost>
<organismHost>
    <name type="scientific">Ochlerotatus taeniorhynchus</name>
    <name type="common">Black salt marsh mosquito</name>
    <name type="synonym">Aedes taeniorhynchus</name>
    <dbReference type="NCBI Taxonomy" id="329105"/>
</organismHost>
<organismHost>
    <name type="scientific">Psorophora ferox</name>
    <dbReference type="NCBI Taxonomy" id="7183"/>
</organismHost>
<proteinExistence type="inferred from homology"/>
<reference key="1">
    <citation type="journal article" date="2006" name="J. Virol.">
        <title>Genome of invertebrate iridescent virus type 3 (mosquito iridescent virus).</title>
        <authorList>
            <person name="Delhon G."/>
            <person name="Tulman E.R."/>
            <person name="Afonso C.L."/>
            <person name="Lu Z."/>
            <person name="Becnel J.J."/>
            <person name="Moser B.A."/>
            <person name="Kutish G.F."/>
            <person name="Rock D.L."/>
        </authorList>
    </citation>
    <scope>NUCLEOTIDE SEQUENCE [LARGE SCALE GENOMIC DNA]</scope>
</reference>
<evidence type="ECO:0000250" key="1"/>
<evidence type="ECO:0000305" key="2"/>
<gene>
    <name type="ORF">IIV3-078R</name>
</gene>